<dbReference type="EMBL" id="U19729">
    <property type="protein sequence ID" value="AAB82360.1"/>
    <property type="molecule type" value="Genomic_DNA"/>
</dbReference>
<dbReference type="EMBL" id="AY558320">
    <property type="protein sequence ID" value="AAS56646.1"/>
    <property type="molecule type" value="Genomic_DNA"/>
</dbReference>
<dbReference type="EMBL" id="BK006945">
    <property type="protein sequence ID" value="DAA09708.1"/>
    <property type="molecule type" value="Genomic_DNA"/>
</dbReference>
<dbReference type="PIR" id="S55964">
    <property type="entry name" value="S55964"/>
</dbReference>
<dbReference type="RefSeq" id="NP_013512.1">
    <property type="nucleotide sequence ID" value="NM_001182296.1"/>
</dbReference>
<dbReference type="SMR" id="Q06071"/>
<dbReference type="BioGRID" id="31665">
    <property type="interactions" value="40"/>
</dbReference>
<dbReference type="ComplexPortal" id="CPX-1153">
    <property type="entry name" value="BLOC-1 complex"/>
</dbReference>
<dbReference type="FunCoup" id="Q06071">
    <property type="interactions" value="35"/>
</dbReference>
<dbReference type="IntAct" id="Q06071">
    <property type="interactions" value="5"/>
</dbReference>
<dbReference type="MINT" id="Q06071"/>
<dbReference type="STRING" id="4932.YLR408C"/>
<dbReference type="iPTMnet" id="Q06071"/>
<dbReference type="PaxDb" id="4932-YLR408C"/>
<dbReference type="PeptideAtlas" id="Q06071"/>
<dbReference type="TopDownProteomics" id="Q06071"/>
<dbReference type="EnsemblFungi" id="YLR408C_mRNA">
    <property type="protein sequence ID" value="YLR408C"/>
    <property type="gene ID" value="YLR408C"/>
</dbReference>
<dbReference type="GeneID" id="851124"/>
<dbReference type="KEGG" id="sce:YLR408C"/>
<dbReference type="AGR" id="SGD:S000004400"/>
<dbReference type="SGD" id="S000004400">
    <property type="gene designation" value="BLS1"/>
</dbReference>
<dbReference type="VEuPathDB" id="FungiDB:YLR408C"/>
<dbReference type="eggNOG" id="ENOG502S787">
    <property type="taxonomic scope" value="Eukaryota"/>
</dbReference>
<dbReference type="HOGENOM" id="CLU_150164_0_0_1"/>
<dbReference type="InParanoid" id="Q06071"/>
<dbReference type="OMA" id="IEANHAY"/>
<dbReference type="OrthoDB" id="20018at2759"/>
<dbReference type="BioCyc" id="YEAST:G3O-32470-MONOMER"/>
<dbReference type="BioGRID-ORCS" id="851124">
    <property type="hits" value="0 hits in 10 CRISPR screens"/>
</dbReference>
<dbReference type="PRO" id="PR:Q06071"/>
<dbReference type="Proteomes" id="UP000002311">
    <property type="component" value="Chromosome XII"/>
</dbReference>
<dbReference type="RNAct" id="Q06071">
    <property type="molecule type" value="protein"/>
</dbReference>
<dbReference type="GO" id="GO:0031083">
    <property type="term" value="C:BLOC-1 complex"/>
    <property type="evidence" value="ECO:0000314"/>
    <property type="project" value="SGD"/>
</dbReference>
<dbReference type="GO" id="GO:0005768">
    <property type="term" value="C:endosome"/>
    <property type="evidence" value="ECO:0000314"/>
    <property type="project" value="ComplexPortal"/>
</dbReference>
<dbReference type="GO" id="GO:0007032">
    <property type="term" value="P:endosome organization"/>
    <property type="evidence" value="ECO:0000315"/>
    <property type="project" value="SGD"/>
</dbReference>
<dbReference type="GO" id="GO:0032880">
    <property type="term" value="P:regulation of protein localization"/>
    <property type="evidence" value="ECO:0000315"/>
    <property type="project" value="SGD"/>
</dbReference>
<reference key="1">
    <citation type="journal article" date="1997" name="Nature">
        <title>The nucleotide sequence of Saccharomyces cerevisiae chromosome XII.</title>
        <authorList>
            <person name="Johnston M."/>
            <person name="Hillier L.W."/>
            <person name="Riles L."/>
            <person name="Albermann K."/>
            <person name="Andre B."/>
            <person name="Ansorge W."/>
            <person name="Benes V."/>
            <person name="Brueckner M."/>
            <person name="Delius H."/>
            <person name="Dubois E."/>
            <person name="Duesterhoeft A."/>
            <person name="Entian K.-D."/>
            <person name="Floeth M."/>
            <person name="Goffeau A."/>
            <person name="Hebling U."/>
            <person name="Heumann K."/>
            <person name="Heuss-Neitzel D."/>
            <person name="Hilbert H."/>
            <person name="Hilger F."/>
            <person name="Kleine K."/>
            <person name="Koetter P."/>
            <person name="Louis E.J."/>
            <person name="Messenguy F."/>
            <person name="Mewes H.-W."/>
            <person name="Miosga T."/>
            <person name="Moestl D."/>
            <person name="Mueller-Auer S."/>
            <person name="Nentwich U."/>
            <person name="Obermaier B."/>
            <person name="Piravandi E."/>
            <person name="Pohl T.M."/>
            <person name="Portetelle D."/>
            <person name="Purnelle B."/>
            <person name="Rechmann S."/>
            <person name="Rieger M."/>
            <person name="Rinke M."/>
            <person name="Rose M."/>
            <person name="Scharfe M."/>
            <person name="Scherens B."/>
            <person name="Scholler P."/>
            <person name="Schwager C."/>
            <person name="Schwarz S."/>
            <person name="Underwood A.P."/>
            <person name="Urrestarazu L.A."/>
            <person name="Vandenbol M."/>
            <person name="Verhasselt P."/>
            <person name="Vierendeels F."/>
            <person name="Voet M."/>
            <person name="Volckaert G."/>
            <person name="Voss H."/>
            <person name="Wambutt R."/>
            <person name="Wedler E."/>
            <person name="Wedler H."/>
            <person name="Zimmermann F.K."/>
            <person name="Zollner A."/>
            <person name="Hani J."/>
            <person name="Hoheisel J.D."/>
        </authorList>
    </citation>
    <scope>NUCLEOTIDE SEQUENCE [LARGE SCALE GENOMIC DNA]</scope>
    <source>
        <strain>ATCC 204508 / S288c</strain>
    </source>
</reference>
<reference key="2">
    <citation type="journal article" date="2014" name="G3 (Bethesda)">
        <title>The reference genome sequence of Saccharomyces cerevisiae: Then and now.</title>
        <authorList>
            <person name="Engel S.R."/>
            <person name="Dietrich F.S."/>
            <person name="Fisk D.G."/>
            <person name="Binkley G."/>
            <person name="Balakrishnan R."/>
            <person name="Costanzo M.C."/>
            <person name="Dwight S.S."/>
            <person name="Hitz B.C."/>
            <person name="Karra K."/>
            <person name="Nash R.S."/>
            <person name="Weng S."/>
            <person name="Wong E.D."/>
            <person name="Lloyd P."/>
            <person name="Skrzypek M.S."/>
            <person name="Miyasato S.R."/>
            <person name="Simison M."/>
            <person name="Cherry J.M."/>
        </authorList>
    </citation>
    <scope>GENOME REANNOTATION</scope>
    <source>
        <strain>ATCC 204508 / S288c</strain>
    </source>
</reference>
<reference key="3">
    <citation type="journal article" date="2007" name="Genome Res.">
        <title>Approaching a complete repository of sequence-verified protein-encoding clones for Saccharomyces cerevisiae.</title>
        <authorList>
            <person name="Hu Y."/>
            <person name="Rolfs A."/>
            <person name="Bhullar B."/>
            <person name="Murthy T.V.S."/>
            <person name="Zhu C."/>
            <person name="Berger M.F."/>
            <person name="Camargo A.A."/>
            <person name="Kelley F."/>
            <person name="McCarron S."/>
            <person name="Jepson D."/>
            <person name="Richardson A."/>
            <person name="Raphael J."/>
            <person name="Moreira D."/>
            <person name="Taycher E."/>
            <person name="Zuo D."/>
            <person name="Mohr S."/>
            <person name="Kane M.F."/>
            <person name="Williamson J."/>
            <person name="Simpson A.J.G."/>
            <person name="Bulyk M.L."/>
            <person name="Harlow E."/>
            <person name="Marsischky G."/>
            <person name="Kolodner R.D."/>
            <person name="LaBaer J."/>
        </authorList>
    </citation>
    <scope>NUCLEOTIDE SEQUENCE [GENOMIC DNA]</scope>
    <source>
        <strain>ATCC 204508 / S288c</strain>
    </source>
</reference>
<reference key="4">
    <citation type="journal article" date="2003" name="Nature">
        <title>Global analysis of protein localization in budding yeast.</title>
        <authorList>
            <person name="Huh W.-K."/>
            <person name="Falvo J.V."/>
            <person name="Gerke L.C."/>
            <person name="Carroll A.S."/>
            <person name="Howson R.W."/>
            <person name="Weissman J.S."/>
            <person name="O'Shea E.K."/>
        </authorList>
    </citation>
    <scope>SUBCELLULAR LOCATION [LARGE SCALE ANALYSIS]</scope>
</reference>
<reference key="5">
    <citation type="journal article" date="2003" name="Nature">
        <title>Global analysis of protein expression in yeast.</title>
        <authorList>
            <person name="Ghaemmaghami S."/>
            <person name="Huh W.-K."/>
            <person name="Bower K."/>
            <person name="Howson R.W."/>
            <person name="Belle A."/>
            <person name="Dephoure N."/>
            <person name="O'Shea E.K."/>
            <person name="Weissman J.S."/>
        </authorList>
    </citation>
    <scope>LEVEL OF PROTEIN EXPRESSION [LARGE SCALE ANALYSIS]</scope>
</reference>
<reference key="6">
    <citation type="journal article" date="2008" name="Mol. Cell. Proteomics">
        <title>A multidimensional chromatography technology for in-depth phosphoproteome analysis.</title>
        <authorList>
            <person name="Albuquerque C.P."/>
            <person name="Smolka M.B."/>
            <person name="Payne S.H."/>
            <person name="Bafna V."/>
            <person name="Eng J."/>
            <person name="Zhou H."/>
        </authorList>
    </citation>
    <scope>PHOSPHORYLATION [LARGE SCALE ANALYSIS] AT SER-33</scope>
    <scope>IDENTIFICATION BY MASS SPECTROMETRY [LARGE SCALE ANALYSIS]</scope>
</reference>
<reference key="7">
    <citation type="journal article" date="2011" name="Traffic">
        <title>Yeast homologues of three BLOC-1 subunits highlight KxDL proteins as conserved interactors of BLOC-1.</title>
        <authorList>
            <person name="Hayes M.J."/>
            <person name="Bryon K."/>
            <person name="Satkurunathan J."/>
            <person name="Levine T.P."/>
        </authorList>
    </citation>
    <scope>IDENTIFICATION IN THE BLOC-1 COMPLEX</scope>
    <scope>FUNCTION</scope>
</reference>
<gene>
    <name type="primary">BLS1</name>
    <name type="ordered locus">YLR408C</name>
</gene>
<comment type="function">
    <text evidence="3">Component of the biogenesis of lysosome-related organelles complex-1 (BLOC-1), a complex involved in endosomal cargo sorting.</text>
</comment>
<comment type="subunit">
    <text evidence="3">Component of the biogenesis of lysosome-related organelles complex-1 (BLOC-1) composed of at least BLI1, BLS1, CNL1, KXD1, SNN1 and VAB2.</text>
</comment>
<comment type="interaction">
    <interactant intactId="EBI-3700144">
        <id>Q06071</id>
    </interactant>
    <interactant intactId="EBI-31100">
        <id>Q06333</id>
        <label>CNL1</label>
    </interactant>
    <organismsDiffer>false</organismsDiffer>
    <experiments>2</experiments>
</comment>
<comment type="subcellular location">
    <subcellularLocation>
        <location evidence="1">Endosome</location>
    </subcellularLocation>
</comment>
<comment type="miscellaneous">
    <text evidence="2">Present with 468 molecules/cell in log phase SD medium.</text>
</comment>
<comment type="similarity">
    <text evidence="4">Belongs to the BLOC1S1 family.</text>
</comment>
<organism>
    <name type="scientific">Saccharomyces cerevisiae (strain ATCC 204508 / S288c)</name>
    <name type="common">Baker's yeast</name>
    <dbReference type="NCBI Taxonomy" id="559292"/>
    <lineage>
        <taxon>Eukaryota</taxon>
        <taxon>Fungi</taxon>
        <taxon>Dikarya</taxon>
        <taxon>Ascomycota</taxon>
        <taxon>Saccharomycotina</taxon>
        <taxon>Saccharomycetes</taxon>
        <taxon>Saccharomycetales</taxon>
        <taxon>Saccharomycetaceae</taxon>
        <taxon>Saccharomyces</taxon>
    </lineage>
</organism>
<proteinExistence type="evidence at protein level"/>
<keyword id="KW-0967">Endosome</keyword>
<keyword id="KW-0597">Phosphoprotein</keyword>
<keyword id="KW-1185">Reference proteome</keyword>
<keyword id="KW-0813">Transport</keyword>
<sequence length="122" mass="14549">MFLTFSMCVNWIIVKMPNRSEELDRLLDKIINSPHRTEASKTLQEIENNQSYILNVQLKKLLRLHDDSFKNKCVSPINYMLEKYTPYMGHTEALQKEAELVDRDLRILEMTYQLIEKNRNSK</sequence>
<protein>
    <recommendedName>
        <fullName>Biogenesis of lysosome-related organelles complex 1 subunit BLS1</fullName>
        <shortName>BLOC-1 subunit BLS1</shortName>
    </recommendedName>
    <alternativeName>
        <fullName>BLOS1-homolog</fullName>
    </alternativeName>
</protein>
<evidence type="ECO:0000269" key="1">
    <source>
    </source>
</evidence>
<evidence type="ECO:0000269" key="2">
    <source>
    </source>
</evidence>
<evidence type="ECO:0000269" key="3">
    <source>
    </source>
</evidence>
<evidence type="ECO:0000305" key="4"/>
<evidence type="ECO:0007744" key="5">
    <source>
    </source>
</evidence>
<feature type="chain" id="PRO_0000247218" description="Biogenesis of lysosome-related organelles complex 1 subunit BLS1">
    <location>
        <begin position="1"/>
        <end position="122"/>
    </location>
</feature>
<feature type="modified residue" description="Phosphoserine" evidence="5">
    <location>
        <position position="33"/>
    </location>
</feature>
<name>BL1S1_YEAST</name>
<accession>Q06071</accession>
<accession>D6VZ42</accession>